<evidence type="ECO:0000255" key="1">
    <source>
        <dbReference type="HAMAP-Rule" id="MF_01398"/>
    </source>
</evidence>
<protein>
    <recommendedName>
        <fullName evidence="1">ATP synthase subunit b</fullName>
    </recommendedName>
    <alternativeName>
        <fullName evidence="1">ATP synthase F(0) sector subunit b</fullName>
    </alternativeName>
    <alternativeName>
        <fullName evidence="1">ATPase subunit I</fullName>
    </alternativeName>
    <alternativeName>
        <fullName evidence="1">F-type ATPase subunit b</fullName>
        <shortName evidence="1">F-ATPase subunit b</shortName>
    </alternativeName>
</protein>
<dbReference type="EMBL" id="CP000097">
    <property type="protein sequence ID" value="ABB25454.1"/>
    <property type="molecule type" value="Genomic_DNA"/>
</dbReference>
<dbReference type="RefSeq" id="WP_011359303.1">
    <property type="nucleotide sequence ID" value="NC_007513.1"/>
</dbReference>
<dbReference type="SMR" id="Q3AZM3"/>
<dbReference type="STRING" id="316279.Syncc9902_0486"/>
<dbReference type="KEGG" id="sye:Syncc9902_0486"/>
<dbReference type="eggNOG" id="COG0711">
    <property type="taxonomic scope" value="Bacteria"/>
</dbReference>
<dbReference type="HOGENOM" id="CLU_079215_8_1_3"/>
<dbReference type="OrthoDB" id="461217at2"/>
<dbReference type="Proteomes" id="UP000002712">
    <property type="component" value="Chromosome"/>
</dbReference>
<dbReference type="GO" id="GO:0031676">
    <property type="term" value="C:plasma membrane-derived thylakoid membrane"/>
    <property type="evidence" value="ECO:0007669"/>
    <property type="project" value="UniProtKB-SubCell"/>
</dbReference>
<dbReference type="GO" id="GO:0045259">
    <property type="term" value="C:proton-transporting ATP synthase complex"/>
    <property type="evidence" value="ECO:0007669"/>
    <property type="project" value="UniProtKB-KW"/>
</dbReference>
<dbReference type="GO" id="GO:0046933">
    <property type="term" value="F:proton-transporting ATP synthase activity, rotational mechanism"/>
    <property type="evidence" value="ECO:0007669"/>
    <property type="project" value="UniProtKB-UniRule"/>
</dbReference>
<dbReference type="CDD" id="cd06503">
    <property type="entry name" value="ATP-synt_Fo_b"/>
    <property type="match status" value="1"/>
</dbReference>
<dbReference type="HAMAP" id="MF_01398">
    <property type="entry name" value="ATP_synth_b_bprime"/>
    <property type="match status" value="1"/>
</dbReference>
<dbReference type="InterPro" id="IPR002146">
    <property type="entry name" value="ATP_synth_b/b'su_bac/chlpt"/>
</dbReference>
<dbReference type="NCBIfam" id="NF005606">
    <property type="entry name" value="PRK07352.1"/>
    <property type="match status" value="1"/>
</dbReference>
<dbReference type="PANTHER" id="PTHR34264">
    <property type="entry name" value="ATP SYNTHASE SUBUNIT B, CHLOROPLASTIC"/>
    <property type="match status" value="1"/>
</dbReference>
<dbReference type="PANTHER" id="PTHR34264:SF3">
    <property type="entry name" value="ATP SYNTHASE SUBUNIT B, CHLOROPLASTIC"/>
    <property type="match status" value="1"/>
</dbReference>
<dbReference type="Pfam" id="PF00430">
    <property type="entry name" value="ATP-synt_B"/>
    <property type="match status" value="1"/>
</dbReference>
<comment type="function">
    <text evidence="1">F(1)F(0) ATP synthase produces ATP from ADP in the presence of a proton or sodium gradient. F-type ATPases consist of two structural domains, F(1) containing the extramembraneous catalytic core and F(0) containing the membrane proton channel, linked together by a central stalk and a peripheral stalk. During catalysis, ATP synthesis in the catalytic domain of F(1) is coupled via a rotary mechanism of the central stalk subunits to proton translocation.</text>
</comment>
<comment type="function">
    <text evidence="1">Component of the F(0) channel, it forms part of the peripheral stalk, linking F(1) to F(0).</text>
</comment>
<comment type="subunit">
    <text evidence="1">F-type ATPases have 2 components, F(1) - the catalytic core - and F(0) - the membrane proton channel. F(1) has five subunits: alpha(3), beta(3), gamma(1), delta(1), epsilon(1). F(0) has four main subunits: a(1), b(1), b'(1) and c(10-14). The alpha and beta chains form an alternating ring which encloses part of the gamma chain. F(1) is attached to F(0) by a central stalk formed by the gamma and epsilon chains, while a peripheral stalk is formed by the delta, b and b' chains.</text>
</comment>
<comment type="subcellular location">
    <subcellularLocation>
        <location evidence="1">Cellular thylakoid membrane</location>
        <topology evidence="1">Single-pass membrane protein</topology>
    </subcellularLocation>
</comment>
<comment type="similarity">
    <text evidence="1">Belongs to the ATPase B chain family.</text>
</comment>
<accession>Q3AZM3</accession>
<gene>
    <name evidence="1" type="primary">atpF</name>
    <name type="ordered locus">Syncc9902_0486</name>
</gene>
<keyword id="KW-0066">ATP synthesis</keyword>
<keyword id="KW-0138">CF(0)</keyword>
<keyword id="KW-0375">Hydrogen ion transport</keyword>
<keyword id="KW-0406">Ion transport</keyword>
<keyword id="KW-0472">Membrane</keyword>
<keyword id="KW-1185">Reference proteome</keyword>
<keyword id="KW-0793">Thylakoid</keyword>
<keyword id="KW-0812">Transmembrane</keyword>
<keyword id="KW-1133">Transmembrane helix</keyword>
<keyword id="KW-0813">Transport</keyword>
<proteinExistence type="inferred from homology"/>
<feature type="chain" id="PRO_0000368828" description="ATP synthase subunit b">
    <location>
        <begin position="1"/>
        <end position="160"/>
    </location>
</feature>
<feature type="transmembrane region" description="Helical" evidence="1">
    <location>
        <begin position="15"/>
        <end position="35"/>
    </location>
</feature>
<organism>
    <name type="scientific">Synechococcus sp. (strain CC9902)</name>
    <dbReference type="NCBI Taxonomy" id="316279"/>
    <lineage>
        <taxon>Bacteria</taxon>
        <taxon>Bacillati</taxon>
        <taxon>Cyanobacteriota</taxon>
        <taxon>Cyanophyceae</taxon>
        <taxon>Synechococcales</taxon>
        <taxon>Synechococcaceae</taxon>
        <taxon>Synechococcus</taxon>
    </lineage>
</organism>
<sequence>MNLNFNPLETNLVNLAIVIGVLFWFLRGFLGGILERRRSAILQDLQDAEARLKTASEELTKAQSELAAAQQKAEQIRIDGQKRAAAIRAEGEKRTISVMAAIKQGAAADADAEASRIKDALRREAAMAAIDKVLTDLPGRLDDAAQSRLIDSTIRNLENA</sequence>
<name>ATPF_SYNS9</name>
<reference key="1">
    <citation type="submission" date="2005-08" db="EMBL/GenBank/DDBJ databases">
        <title>Complete sequence of Synechococcus sp. CC9902.</title>
        <authorList>
            <person name="Copeland A."/>
            <person name="Lucas S."/>
            <person name="Lapidus A."/>
            <person name="Barry K."/>
            <person name="Detter J.C."/>
            <person name="Glavina T."/>
            <person name="Hammon N."/>
            <person name="Israni S."/>
            <person name="Pitluck S."/>
            <person name="Martinez M."/>
            <person name="Schmutz J."/>
            <person name="Larimer F."/>
            <person name="Land M."/>
            <person name="Kyrpides N."/>
            <person name="Ivanova N."/>
            <person name="Richardson P."/>
        </authorList>
    </citation>
    <scope>NUCLEOTIDE SEQUENCE [LARGE SCALE GENOMIC DNA]</scope>
    <source>
        <strain>CC9902</strain>
    </source>
</reference>